<organism>
    <name type="scientific">Streptococcus gordonii</name>
    <dbReference type="NCBI Taxonomy" id="1302"/>
    <lineage>
        <taxon>Bacteria</taxon>
        <taxon>Bacillati</taxon>
        <taxon>Bacillota</taxon>
        <taxon>Bacilli</taxon>
        <taxon>Lactobacillales</taxon>
        <taxon>Streptococcaceae</taxon>
        <taxon>Streptococcus</taxon>
    </lineage>
</organism>
<proteinExistence type="inferred from homology"/>
<evidence type="ECO:0000255" key="1">
    <source>
        <dbReference type="HAMAP-Rule" id="MF_00841"/>
    </source>
</evidence>
<evidence type="ECO:0000269" key="2">
    <source>
    </source>
</evidence>
<evidence type="ECO:0000269" key="3">
    <source>
    </source>
</evidence>
<evidence type="ECO:0000303" key="4">
    <source>
    </source>
</evidence>
<keyword id="KW-0328">Glycosyltransferase</keyword>
<keyword id="KW-0547">Nucleotide-binding</keyword>
<keyword id="KW-0808">Transferase</keyword>
<protein>
    <recommendedName>
        <fullName evidence="1">Glucosyltransferase 3</fullName>
        <ecNumber evidence="1">2.4.1.-</ecNumber>
    </recommendedName>
    <alternativeName>
        <fullName evidence="4">Sugar transferase Nss</fullName>
    </alternativeName>
</protein>
<gene>
    <name evidence="1" type="primary">gtf3</name>
    <name evidence="4" type="synonym">nss</name>
</gene>
<reference key="1">
    <citation type="journal article" date="2002" name="Mol. Microbiol.">
        <title>An accessory sec locus of Streptococcus gordonii is required for export of the surface protein GspB and for normal levels of binding to human platelets.</title>
        <authorList>
            <person name="Bensing B.A."/>
            <person name="Sullam P.M."/>
        </authorList>
    </citation>
    <scope>NUCLEOTIDE SEQUENCE [GENOMIC DNA]</scope>
    <source>
        <strain>M99</strain>
    </source>
</reference>
<reference key="2">
    <citation type="journal article" date="2004" name="Mol. Microbiol.">
        <title>Genes in the accessory sec locus of Streptococcus gordonii have three functionally distinct effects on the expression of the platelet-binding protein GspB.</title>
        <authorList>
            <person name="Takamatsu D."/>
            <person name="Bensing B.A."/>
            <person name="Sullam P.M."/>
        </authorList>
    </citation>
    <scope>FUNCTION</scope>
    <scope>PATHWAY</scope>
    <scope>DISRUPTION PHENOTYPE</scope>
    <source>
        <strain>M99</strain>
    </source>
</reference>
<reference key="3">
    <citation type="journal article" date="2004" name="J. Bacteriol.">
        <title>Four proteins encoded in the gspB-secY2A2 operon of Streptococcus gordonii mediate the intracellular glycosylation of the platelet-binding protein GspB.</title>
        <authorList>
            <person name="Takamatsu D."/>
            <person name="Bensing B.A."/>
            <person name="Sullam P.M."/>
        </authorList>
    </citation>
    <scope>FUNCTION</scope>
    <scope>PATHWAY</scope>
    <scope>DISRUPTION PHENOTYPE</scope>
    <source>
        <strain>M99</strain>
    </source>
</reference>
<sequence length="334" mass="38007">MKVNITNLYGMSGQSTALIAQNDVTKLAKQLGFNELSFYFYDIYSDSQSELSRRLDGIMASVGYGDVVIYQSPTWNGREFDQAFISKLKILQAKLITFIHDVPPLMFPSNYYLMPEYIDMYNQSDAVIVPSEQMRDKLLAEGLTVNKILIQRMWDHPYDLPLHQPQFAPKLYFAGSVERFPHLINWSYATPLEIFSPEEESNPEANVSYCGWVSRPELLLELSKGGLGLVWGVEDNPADEPEYYGLNISHKSATYLAAGIPVIVPSYLSNAELIRERGLGFVVDSLEEASRIVENLTVEEYQDMVERVRKFSFLLKEGYFSKKVLIDAVMEVLS</sequence>
<accession>Q9AEU1</accession>
<name>GTF3_STRGN</name>
<comment type="function">
    <text evidence="1">Required for polymorphic O-glycosylation of the serine-rich repeat protein in this bacteria. Catalyzes the second step in glycosylation by transferring glucose from UDP-glucose to the terminal GlcNAc moiety of the 3-O-(N-acetyl-alpha-D-glucosaminyl)-L-seryl-[protein] resulting from the first glycosylation step.</text>
</comment>
<comment type="function">
    <text evidence="2 3">Part of the accessory SecA2/SecY2 system specifically required to export GspB, a serine-rich repeat cell wall protein encoded upstream in the same operon.</text>
</comment>
<comment type="pathway">
    <text evidence="1 2 3">Protein modification; protein glycosylation.</text>
</comment>
<comment type="subunit">
    <text evidence="1">Homotetramer; a dimer of dimers.</text>
</comment>
<comment type="domain">
    <text evidence="1">Dimerizes via the C-terminus; dimerization is required for tetramer formation. Binds protein substrate via an exposed loop in the N-terminus.</text>
</comment>
<comment type="disruption phenotype">
    <text evidence="2 3">Alters carbohydrate composition of cell wall protein GspB, about 20% reduction in platelet binding by whole cells.</text>
</comment>
<comment type="similarity">
    <text evidence="1">Belongs to the Gtf3 glucosyltransferase family.</text>
</comment>
<dbReference type="EC" id="2.4.1.-" evidence="1"/>
<dbReference type="EMBL" id="AY028381">
    <property type="protein sequence ID" value="AAK16996.1"/>
    <property type="molecule type" value="Genomic_DNA"/>
</dbReference>
<dbReference type="RefSeq" id="WP_045634950.1">
    <property type="nucleotide sequence ID" value="NZ_RJPG01000001.1"/>
</dbReference>
<dbReference type="SMR" id="Q9AEU1"/>
<dbReference type="UniPathway" id="UPA00378"/>
<dbReference type="GO" id="GO:0000166">
    <property type="term" value="F:nucleotide binding"/>
    <property type="evidence" value="ECO:0007669"/>
    <property type="project" value="UniProtKB-KW"/>
</dbReference>
<dbReference type="GO" id="GO:0035251">
    <property type="term" value="F:UDP-glucosyltransferase activity"/>
    <property type="evidence" value="ECO:0007669"/>
    <property type="project" value="UniProtKB-UniRule"/>
</dbReference>
<dbReference type="GO" id="GO:0006486">
    <property type="term" value="P:protein glycosylation"/>
    <property type="evidence" value="ECO:0007669"/>
    <property type="project" value="UniProtKB-UniRule"/>
</dbReference>
<dbReference type="Gene3D" id="3.40.50.2000">
    <property type="entry name" value="Glycogen Phosphorylase B"/>
    <property type="match status" value="2"/>
</dbReference>
<dbReference type="HAMAP" id="MF_00841">
    <property type="entry name" value="Gtf3"/>
    <property type="match status" value="1"/>
</dbReference>
<dbReference type="InterPro" id="IPR043676">
    <property type="entry name" value="Gtf3"/>
</dbReference>
<dbReference type="NCBIfam" id="NF007322">
    <property type="entry name" value="PRK09814.1-1"/>
    <property type="match status" value="1"/>
</dbReference>
<dbReference type="PIRSF" id="PIRSF007023">
    <property type="entry name" value="UDP-Galf_transf"/>
    <property type="match status" value="1"/>
</dbReference>
<dbReference type="SUPFAM" id="SSF53756">
    <property type="entry name" value="UDP-Glycosyltransferase/glycogen phosphorylase"/>
    <property type="match status" value="1"/>
</dbReference>
<feature type="chain" id="PRO_0000414203" description="Glucosyltransferase 3">
    <location>
        <begin position="1"/>
        <end position="334"/>
    </location>
</feature>
<feature type="binding site" evidence="1">
    <location>
        <position position="16"/>
    </location>
    <ligand>
        <name>UDP</name>
        <dbReference type="ChEBI" id="CHEBI:58223"/>
    </ligand>
</feature>
<feature type="binding site" evidence="1">
    <location>
        <position position="179"/>
    </location>
    <ligand>
        <name>UDP</name>
        <dbReference type="ChEBI" id="CHEBI:58223"/>
    </ligand>
</feature>
<feature type="binding site" evidence="1">
    <location>
        <begin position="249"/>
        <end position="254"/>
    </location>
    <ligand>
        <name>UDP</name>
        <dbReference type="ChEBI" id="CHEBI:58223"/>
    </ligand>
</feature>